<accession>B0TX15</accession>
<dbReference type="EC" id="2.5.1.6" evidence="1"/>
<dbReference type="EMBL" id="CP000937">
    <property type="protein sequence ID" value="ABZ87273.1"/>
    <property type="molecule type" value="Genomic_DNA"/>
</dbReference>
<dbReference type="SMR" id="B0TX15"/>
<dbReference type="KEGG" id="fph:Fphi_1051"/>
<dbReference type="eggNOG" id="COG0192">
    <property type="taxonomic scope" value="Bacteria"/>
</dbReference>
<dbReference type="HOGENOM" id="CLU_041802_1_1_6"/>
<dbReference type="UniPathway" id="UPA00315">
    <property type="reaction ID" value="UER00080"/>
</dbReference>
<dbReference type="GO" id="GO:0005737">
    <property type="term" value="C:cytoplasm"/>
    <property type="evidence" value="ECO:0007669"/>
    <property type="project" value="UniProtKB-SubCell"/>
</dbReference>
<dbReference type="GO" id="GO:0005524">
    <property type="term" value="F:ATP binding"/>
    <property type="evidence" value="ECO:0007669"/>
    <property type="project" value="UniProtKB-UniRule"/>
</dbReference>
<dbReference type="GO" id="GO:0000287">
    <property type="term" value="F:magnesium ion binding"/>
    <property type="evidence" value="ECO:0007669"/>
    <property type="project" value="UniProtKB-UniRule"/>
</dbReference>
<dbReference type="GO" id="GO:0004478">
    <property type="term" value="F:methionine adenosyltransferase activity"/>
    <property type="evidence" value="ECO:0007669"/>
    <property type="project" value="UniProtKB-UniRule"/>
</dbReference>
<dbReference type="GO" id="GO:0006730">
    <property type="term" value="P:one-carbon metabolic process"/>
    <property type="evidence" value="ECO:0007669"/>
    <property type="project" value="UniProtKB-KW"/>
</dbReference>
<dbReference type="GO" id="GO:0006556">
    <property type="term" value="P:S-adenosylmethionine biosynthetic process"/>
    <property type="evidence" value="ECO:0007669"/>
    <property type="project" value="UniProtKB-UniRule"/>
</dbReference>
<dbReference type="CDD" id="cd18079">
    <property type="entry name" value="S-AdoMet_synt"/>
    <property type="match status" value="1"/>
</dbReference>
<dbReference type="FunFam" id="3.30.300.10:FF:000003">
    <property type="entry name" value="S-adenosylmethionine synthase"/>
    <property type="match status" value="1"/>
</dbReference>
<dbReference type="Gene3D" id="3.30.300.10">
    <property type="match status" value="3"/>
</dbReference>
<dbReference type="HAMAP" id="MF_00086">
    <property type="entry name" value="S_AdoMet_synth1"/>
    <property type="match status" value="1"/>
</dbReference>
<dbReference type="InterPro" id="IPR022631">
    <property type="entry name" value="ADOMET_SYNTHASE_CS"/>
</dbReference>
<dbReference type="InterPro" id="IPR022630">
    <property type="entry name" value="S-AdoMet_synt_C"/>
</dbReference>
<dbReference type="InterPro" id="IPR022629">
    <property type="entry name" value="S-AdoMet_synt_central"/>
</dbReference>
<dbReference type="InterPro" id="IPR022628">
    <property type="entry name" value="S-AdoMet_synt_N"/>
</dbReference>
<dbReference type="InterPro" id="IPR002133">
    <property type="entry name" value="S-AdoMet_synthetase"/>
</dbReference>
<dbReference type="InterPro" id="IPR022636">
    <property type="entry name" value="S-AdoMet_synthetase_sfam"/>
</dbReference>
<dbReference type="NCBIfam" id="TIGR01034">
    <property type="entry name" value="metK"/>
    <property type="match status" value="1"/>
</dbReference>
<dbReference type="PANTHER" id="PTHR11964">
    <property type="entry name" value="S-ADENOSYLMETHIONINE SYNTHETASE"/>
    <property type="match status" value="1"/>
</dbReference>
<dbReference type="Pfam" id="PF02773">
    <property type="entry name" value="S-AdoMet_synt_C"/>
    <property type="match status" value="1"/>
</dbReference>
<dbReference type="Pfam" id="PF02772">
    <property type="entry name" value="S-AdoMet_synt_M"/>
    <property type="match status" value="1"/>
</dbReference>
<dbReference type="Pfam" id="PF00438">
    <property type="entry name" value="S-AdoMet_synt_N"/>
    <property type="match status" value="1"/>
</dbReference>
<dbReference type="PIRSF" id="PIRSF000497">
    <property type="entry name" value="MAT"/>
    <property type="match status" value="1"/>
</dbReference>
<dbReference type="SUPFAM" id="SSF55973">
    <property type="entry name" value="S-adenosylmethionine synthetase"/>
    <property type="match status" value="3"/>
</dbReference>
<dbReference type="PROSITE" id="PS00376">
    <property type="entry name" value="ADOMET_SYNTHASE_1"/>
    <property type="match status" value="1"/>
</dbReference>
<dbReference type="PROSITE" id="PS00377">
    <property type="entry name" value="ADOMET_SYNTHASE_2"/>
    <property type="match status" value="1"/>
</dbReference>
<proteinExistence type="inferred from homology"/>
<comment type="function">
    <text evidence="1">Catalyzes the formation of S-adenosylmethionine (AdoMet) from methionine and ATP. The overall synthetic reaction is composed of two sequential steps, AdoMet formation and the subsequent tripolyphosphate hydrolysis which occurs prior to release of AdoMet from the enzyme.</text>
</comment>
<comment type="catalytic activity">
    <reaction evidence="1">
        <text>L-methionine + ATP + H2O = S-adenosyl-L-methionine + phosphate + diphosphate</text>
        <dbReference type="Rhea" id="RHEA:21080"/>
        <dbReference type="ChEBI" id="CHEBI:15377"/>
        <dbReference type="ChEBI" id="CHEBI:30616"/>
        <dbReference type="ChEBI" id="CHEBI:33019"/>
        <dbReference type="ChEBI" id="CHEBI:43474"/>
        <dbReference type="ChEBI" id="CHEBI:57844"/>
        <dbReference type="ChEBI" id="CHEBI:59789"/>
        <dbReference type="EC" id="2.5.1.6"/>
    </reaction>
</comment>
<comment type="cofactor">
    <cofactor evidence="1">
        <name>Mg(2+)</name>
        <dbReference type="ChEBI" id="CHEBI:18420"/>
    </cofactor>
    <text evidence="1">Binds 2 divalent ions per subunit.</text>
</comment>
<comment type="cofactor">
    <cofactor evidence="1">
        <name>K(+)</name>
        <dbReference type="ChEBI" id="CHEBI:29103"/>
    </cofactor>
    <text evidence="1">Binds 1 potassium ion per subunit.</text>
</comment>
<comment type="pathway">
    <text evidence="1">Amino-acid biosynthesis; S-adenosyl-L-methionine biosynthesis; S-adenosyl-L-methionine from L-methionine: step 1/1.</text>
</comment>
<comment type="subunit">
    <text evidence="1">Homotetramer; dimer of dimers.</text>
</comment>
<comment type="subcellular location">
    <subcellularLocation>
        <location evidence="1">Cytoplasm</location>
    </subcellularLocation>
</comment>
<comment type="similarity">
    <text evidence="1">Belongs to the AdoMet synthase family.</text>
</comment>
<feature type="chain" id="PRO_1000075376" description="S-adenosylmethionine synthase">
    <location>
        <begin position="1"/>
        <end position="386"/>
    </location>
</feature>
<feature type="region of interest" description="Flexible loop" evidence="1">
    <location>
        <begin position="100"/>
        <end position="110"/>
    </location>
</feature>
<feature type="binding site" description="in other chain" evidence="1">
    <location>
        <position position="16"/>
    </location>
    <ligand>
        <name>ATP</name>
        <dbReference type="ChEBI" id="CHEBI:30616"/>
        <note>ligand shared between two neighboring subunits</note>
    </ligand>
</feature>
<feature type="binding site" evidence="1">
    <location>
        <position position="18"/>
    </location>
    <ligand>
        <name>Mg(2+)</name>
        <dbReference type="ChEBI" id="CHEBI:18420"/>
    </ligand>
</feature>
<feature type="binding site" evidence="1">
    <location>
        <position position="44"/>
    </location>
    <ligand>
        <name>K(+)</name>
        <dbReference type="ChEBI" id="CHEBI:29103"/>
    </ligand>
</feature>
<feature type="binding site" description="in other chain" evidence="1">
    <location>
        <position position="57"/>
    </location>
    <ligand>
        <name>L-methionine</name>
        <dbReference type="ChEBI" id="CHEBI:57844"/>
        <note>ligand shared between two neighboring subunits</note>
    </ligand>
</feature>
<feature type="binding site" description="in other chain" evidence="1">
    <location>
        <position position="100"/>
    </location>
    <ligand>
        <name>L-methionine</name>
        <dbReference type="ChEBI" id="CHEBI:57844"/>
        <note>ligand shared between two neighboring subunits</note>
    </ligand>
</feature>
<feature type="binding site" description="in other chain" evidence="1">
    <location>
        <begin position="165"/>
        <end position="167"/>
    </location>
    <ligand>
        <name>ATP</name>
        <dbReference type="ChEBI" id="CHEBI:30616"/>
        <note>ligand shared between two neighboring subunits</note>
    </ligand>
</feature>
<feature type="binding site" evidence="1">
    <location>
        <position position="240"/>
    </location>
    <ligand>
        <name>ATP</name>
        <dbReference type="ChEBI" id="CHEBI:30616"/>
        <note>ligand shared between two neighboring subunits</note>
    </ligand>
</feature>
<feature type="binding site" evidence="1">
    <location>
        <position position="240"/>
    </location>
    <ligand>
        <name>L-methionine</name>
        <dbReference type="ChEBI" id="CHEBI:57844"/>
        <note>ligand shared between two neighboring subunits</note>
    </ligand>
</feature>
<feature type="binding site" description="in other chain" evidence="1">
    <location>
        <begin position="246"/>
        <end position="247"/>
    </location>
    <ligand>
        <name>ATP</name>
        <dbReference type="ChEBI" id="CHEBI:30616"/>
        <note>ligand shared between two neighboring subunits</note>
    </ligand>
</feature>
<feature type="binding site" evidence="1">
    <location>
        <position position="263"/>
    </location>
    <ligand>
        <name>ATP</name>
        <dbReference type="ChEBI" id="CHEBI:30616"/>
        <note>ligand shared between two neighboring subunits</note>
    </ligand>
</feature>
<feature type="binding site" evidence="1">
    <location>
        <position position="267"/>
    </location>
    <ligand>
        <name>ATP</name>
        <dbReference type="ChEBI" id="CHEBI:30616"/>
        <note>ligand shared between two neighboring subunits</note>
    </ligand>
</feature>
<feature type="binding site" description="in other chain" evidence="1">
    <location>
        <position position="271"/>
    </location>
    <ligand>
        <name>L-methionine</name>
        <dbReference type="ChEBI" id="CHEBI:57844"/>
        <note>ligand shared between two neighboring subunits</note>
    </ligand>
</feature>
<gene>
    <name evidence="1" type="primary">metK</name>
    <name type="ordered locus">Fphi_1051</name>
</gene>
<protein>
    <recommendedName>
        <fullName evidence="1">S-adenosylmethionine synthase</fullName>
        <shortName evidence="1">AdoMet synthase</shortName>
        <ecNumber evidence="1">2.5.1.6</ecNumber>
    </recommendedName>
    <alternativeName>
        <fullName evidence="1">MAT</fullName>
    </alternativeName>
    <alternativeName>
        <fullName evidence="1">Methionine adenosyltransferase</fullName>
    </alternativeName>
</protein>
<organism>
    <name type="scientific">Francisella philomiragia subsp. philomiragia (strain ATCC 25017 / CCUG 19701 / FSC 153 / O#319-036)</name>
    <dbReference type="NCBI Taxonomy" id="484022"/>
    <lineage>
        <taxon>Bacteria</taxon>
        <taxon>Pseudomonadati</taxon>
        <taxon>Pseudomonadota</taxon>
        <taxon>Gammaproteobacteria</taxon>
        <taxon>Thiotrichales</taxon>
        <taxon>Francisellaceae</taxon>
        <taxon>Francisella</taxon>
    </lineage>
</organism>
<sequence>MSKNYLFTSESVSEGHPDKLADQISDAILDEILKQDKNARVACETLVKTGMALVAGEITTSAWIDIEELVRKVIVETGYDNANKGIDGRTCSVINAIGKQSSDIAQGVDRGSLEDLGAGDQGLMFGFATNETPTLMPSAIYYSHLLMRKQAEHRKSGKLGWLRPDAKAQVTLAYENDKPKFIDTIVLSTQHNESISQKDLHDAVIEEIVKEVIPAELITKDTKYHINPTGVFLIGGPQGDCGLTGRKIIVDTYGGAAHHGGGAFSGKDPSKVDRSGAYMGRYIAKNVVAAGLADKCEVQVAYAIGVAKPVSLMVNTFGTGKISDSKIEKLVSETFDLRVGKIIENLDLLRPIYRKTSNYGHFGRELPEFTWEKIDKADNLKSAAKI</sequence>
<name>METK_FRAP2</name>
<evidence type="ECO:0000255" key="1">
    <source>
        <dbReference type="HAMAP-Rule" id="MF_00086"/>
    </source>
</evidence>
<keyword id="KW-0067">ATP-binding</keyword>
<keyword id="KW-0963">Cytoplasm</keyword>
<keyword id="KW-0460">Magnesium</keyword>
<keyword id="KW-0479">Metal-binding</keyword>
<keyword id="KW-0547">Nucleotide-binding</keyword>
<keyword id="KW-0554">One-carbon metabolism</keyword>
<keyword id="KW-0630">Potassium</keyword>
<keyword id="KW-0808">Transferase</keyword>
<reference key="1">
    <citation type="submission" date="2007-12" db="EMBL/GenBank/DDBJ databases">
        <title>Complete sequence of chromosome of Francisella philomiragia subsp. philomiragia ATCC 25017.</title>
        <authorList>
            <consortium name="US DOE Joint Genome Institute"/>
            <person name="Copeland A."/>
            <person name="Lucas S."/>
            <person name="Lapidus A."/>
            <person name="Barry K."/>
            <person name="Detter J.C."/>
            <person name="Glavina del Rio T."/>
            <person name="Hammon N."/>
            <person name="Israni S."/>
            <person name="Dalin E."/>
            <person name="Tice H."/>
            <person name="Pitluck S."/>
            <person name="Chain P."/>
            <person name="Malfatti S."/>
            <person name="Shin M."/>
            <person name="Vergez L."/>
            <person name="Schmutz J."/>
            <person name="Larimer F."/>
            <person name="Land M."/>
            <person name="Hauser L."/>
            <person name="Richardson P."/>
        </authorList>
    </citation>
    <scope>NUCLEOTIDE SEQUENCE [LARGE SCALE GENOMIC DNA]</scope>
    <source>
        <strain>ATCC 25017 / CCUG 19701 / FSC 153 / O#319-036</strain>
    </source>
</reference>